<reference key="1">
    <citation type="journal article" date="1995" name="Genomics">
        <title>Molecular cloning of the microfibrillar protein MFAP3 and assignment of the gene to human chromosome 5q32-q33.2.</title>
        <authorList>
            <person name="Abrams W.R."/>
            <person name="Ma R.-I."/>
            <person name="Kucich U."/>
            <person name="Bashir M.M."/>
            <person name="Decker S."/>
            <person name="Tsipouras P."/>
            <person name="McPherson J.D."/>
            <person name="Wasmuth J.J."/>
            <person name="Rosenbloom J."/>
        </authorList>
    </citation>
    <scope>NUCLEOTIDE SEQUENCE [GENOMIC DNA]</scope>
    <source>
        <tissue>Fibroblast</tissue>
    </source>
</reference>
<reference key="2">
    <citation type="journal article" date="2004" name="Nat. Genet.">
        <title>Complete sequencing and characterization of 21,243 full-length human cDNAs.</title>
        <authorList>
            <person name="Ota T."/>
            <person name="Suzuki Y."/>
            <person name="Nishikawa T."/>
            <person name="Otsuki T."/>
            <person name="Sugiyama T."/>
            <person name="Irie R."/>
            <person name="Wakamatsu A."/>
            <person name="Hayashi K."/>
            <person name="Sato H."/>
            <person name="Nagai K."/>
            <person name="Kimura K."/>
            <person name="Makita H."/>
            <person name="Sekine M."/>
            <person name="Obayashi M."/>
            <person name="Nishi T."/>
            <person name="Shibahara T."/>
            <person name="Tanaka T."/>
            <person name="Ishii S."/>
            <person name="Yamamoto J."/>
            <person name="Saito K."/>
            <person name="Kawai Y."/>
            <person name="Isono Y."/>
            <person name="Nakamura Y."/>
            <person name="Nagahari K."/>
            <person name="Murakami K."/>
            <person name="Yasuda T."/>
            <person name="Iwayanagi T."/>
            <person name="Wagatsuma M."/>
            <person name="Shiratori A."/>
            <person name="Sudo H."/>
            <person name="Hosoiri T."/>
            <person name="Kaku Y."/>
            <person name="Kodaira H."/>
            <person name="Kondo H."/>
            <person name="Sugawara M."/>
            <person name="Takahashi M."/>
            <person name="Kanda K."/>
            <person name="Yokoi T."/>
            <person name="Furuya T."/>
            <person name="Kikkawa E."/>
            <person name="Omura Y."/>
            <person name="Abe K."/>
            <person name="Kamihara K."/>
            <person name="Katsuta N."/>
            <person name="Sato K."/>
            <person name="Tanikawa M."/>
            <person name="Yamazaki M."/>
            <person name="Ninomiya K."/>
            <person name="Ishibashi T."/>
            <person name="Yamashita H."/>
            <person name="Murakawa K."/>
            <person name="Fujimori K."/>
            <person name="Tanai H."/>
            <person name="Kimata M."/>
            <person name="Watanabe M."/>
            <person name="Hiraoka S."/>
            <person name="Chiba Y."/>
            <person name="Ishida S."/>
            <person name="Ono Y."/>
            <person name="Takiguchi S."/>
            <person name="Watanabe S."/>
            <person name="Yosida M."/>
            <person name="Hotuta T."/>
            <person name="Kusano J."/>
            <person name="Kanehori K."/>
            <person name="Takahashi-Fujii A."/>
            <person name="Hara H."/>
            <person name="Tanase T.-O."/>
            <person name="Nomura Y."/>
            <person name="Togiya S."/>
            <person name="Komai F."/>
            <person name="Hara R."/>
            <person name="Takeuchi K."/>
            <person name="Arita M."/>
            <person name="Imose N."/>
            <person name="Musashino K."/>
            <person name="Yuuki H."/>
            <person name="Oshima A."/>
            <person name="Sasaki N."/>
            <person name="Aotsuka S."/>
            <person name="Yoshikawa Y."/>
            <person name="Matsunawa H."/>
            <person name="Ichihara T."/>
            <person name="Shiohata N."/>
            <person name="Sano S."/>
            <person name="Moriya S."/>
            <person name="Momiyama H."/>
            <person name="Satoh N."/>
            <person name="Takami S."/>
            <person name="Terashima Y."/>
            <person name="Suzuki O."/>
            <person name="Nakagawa S."/>
            <person name="Senoh A."/>
            <person name="Mizoguchi H."/>
            <person name="Goto Y."/>
            <person name="Shimizu F."/>
            <person name="Wakebe H."/>
            <person name="Hishigaki H."/>
            <person name="Watanabe T."/>
            <person name="Sugiyama A."/>
            <person name="Takemoto M."/>
            <person name="Kawakami B."/>
            <person name="Yamazaki M."/>
            <person name="Watanabe K."/>
            <person name="Kumagai A."/>
            <person name="Itakura S."/>
            <person name="Fukuzumi Y."/>
            <person name="Fujimori Y."/>
            <person name="Komiyama M."/>
            <person name="Tashiro H."/>
            <person name="Tanigami A."/>
            <person name="Fujiwara T."/>
            <person name="Ono T."/>
            <person name="Yamada K."/>
            <person name="Fujii Y."/>
            <person name="Ozaki K."/>
            <person name="Hirao M."/>
            <person name="Ohmori Y."/>
            <person name="Kawabata A."/>
            <person name="Hikiji T."/>
            <person name="Kobatake N."/>
            <person name="Inagaki H."/>
            <person name="Ikema Y."/>
            <person name="Okamoto S."/>
            <person name="Okitani R."/>
            <person name="Kawakami T."/>
            <person name="Noguchi S."/>
            <person name="Itoh T."/>
            <person name="Shigeta K."/>
            <person name="Senba T."/>
            <person name="Matsumura K."/>
            <person name="Nakajima Y."/>
            <person name="Mizuno T."/>
            <person name="Morinaga M."/>
            <person name="Sasaki M."/>
            <person name="Togashi T."/>
            <person name="Oyama M."/>
            <person name="Hata H."/>
            <person name="Watanabe M."/>
            <person name="Komatsu T."/>
            <person name="Mizushima-Sugano J."/>
            <person name="Satoh T."/>
            <person name="Shirai Y."/>
            <person name="Takahashi Y."/>
            <person name="Nakagawa K."/>
            <person name="Okumura K."/>
            <person name="Nagase T."/>
            <person name="Nomura N."/>
            <person name="Kikuchi H."/>
            <person name="Masuho Y."/>
            <person name="Yamashita R."/>
            <person name="Nakai K."/>
            <person name="Yada T."/>
            <person name="Nakamura Y."/>
            <person name="Ohara O."/>
            <person name="Isogai T."/>
            <person name="Sugano S."/>
        </authorList>
    </citation>
    <scope>NUCLEOTIDE SEQUENCE [LARGE SCALE MRNA] (ISOFORMS 1 AND 2)</scope>
    <source>
        <tissue>Placenta</tissue>
    </source>
</reference>
<reference key="3">
    <citation type="journal article" date="2004" name="Nature">
        <title>The DNA sequence and comparative analysis of human chromosome 5.</title>
        <authorList>
            <person name="Schmutz J."/>
            <person name="Martin J."/>
            <person name="Terry A."/>
            <person name="Couronne O."/>
            <person name="Grimwood J."/>
            <person name="Lowry S."/>
            <person name="Gordon L.A."/>
            <person name="Scott D."/>
            <person name="Xie G."/>
            <person name="Huang W."/>
            <person name="Hellsten U."/>
            <person name="Tran-Gyamfi M."/>
            <person name="She X."/>
            <person name="Prabhakar S."/>
            <person name="Aerts A."/>
            <person name="Altherr M."/>
            <person name="Bajorek E."/>
            <person name="Black S."/>
            <person name="Branscomb E."/>
            <person name="Caoile C."/>
            <person name="Challacombe J.F."/>
            <person name="Chan Y.M."/>
            <person name="Denys M."/>
            <person name="Detter J.C."/>
            <person name="Escobar J."/>
            <person name="Flowers D."/>
            <person name="Fotopulos D."/>
            <person name="Glavina T."/>
            <person name="Gomez M."/>
            <person name="Gonzales E."/>
            <person name="Goodstein D."/>
            <person name="Grigoriev I."/>
            <person name="Groza M."/>
            <person name="Hammon N."/>
            <person name="Hawkins T."/>
            <person name="Haydu L."/>
            <person name="Israni S."/>
            <person name="Jett J."/>
            <person name="Kadner K."/>
            <person name="Kimball H."/>
            <person name="Kobayashi A."/>
            <person name="Lopez F."/>
            <person name="Lou Y."/>
            <person name="Martinez D."/>
            <person name="Medina C."/>
            <person name="Morgan J."/>
            <person name="Nandkeshwar R."/>
            <person name="Noonan J.P."/>
            <person name="Pitluck S."/>
            <person name="Pollard M."/>
            <person name="Predki P."/>
            <person name="Priest J."/>
            <person name="Ramirez L."/>
            <person name="Retterer J."/>
            <person name="Rodriguez A."/>
            <person name="Rogers S."/>
            <person name="Salamov A."/>
            <person name="Salazar A."/>
            <person name="Thayer N."/>
            <person name="Tice H."/>
            <person name="Tsai M."/>
            <person name="Ustaszewska A."/>
            <person name="Vo N."/>
            <person name="Wheeler J."/>
            <person name="Wu K."/>
            <person name="Yang J."/>
            <person name="Dickson M."/>
            <person name="Cheng J.-F."/>
            <person name="Eichler E.E."/>
            <person name="Olsen A."/>
            <person name="Pennacchio L.A."/>
            <person name="Rokhsar D.S."/>
            <person name="Richardson P."/>
            <person name="Lucas S.M."/>
            <person name="Myers R.M."/>
            <person name="Rubin E.M."/>
        </authorList>
    </citation>
    <scope>NUCLEOTIDE SEQUENCE [LARGE SCALE GENOMIC DNA]</scope>
</reference>
<reference key="4">
    <citation type="submission" date="2005-09" db="EMBL/GenBank/DDBJ databases">
        <authorList>
            <person name="Mural R.J."/>
            <person name="Istrail S."/>
            <person name="Sutton G.G."/>
            <person name="Florea L."/>
            <person name="Halpern A.L."/>
            <person name="Mobarry C.M."/>
            <person name="Lippert R."/>
            <person name="Walenz B."/>
            <person name="Shatkay H."/>
            <person name="Dew I."/>
            <person name="Miller J.R."/>
            <person name="Flanigan M.J."/>
            <person name="Edwards N.J."/>
            <person name="Bolanos R."/>
            <person name="Fasulo D."/>
            <person name="Halldorsson B.V."/>
            <person name="Hannenhalli S."/>
            <person name="Turner R."/>
            <person name="Yooseph S."/>
            <person name="Lu F."/>
            <person name="Nusskern D.R."/>
            <person name="Shue B.C."/>
            <person name="Zheng X.H."/>
            <person name="Zhong F."/>
            <person name="Delcher A.L."/>
            <person name="Huson D.H."/>
            <person name="Kravitz S.A."/>
            <person name="Mouchard L."/>
            <person name="Reinert K."/>
            <person name="Remington K.A."/>
            <person name="Clark A.G."/>
            <person name="Waterman M.S."/>
            <person name="Eichler E.E."/>
            <person name="Adams M.D."/>
            <person name="Hunkapiller M.W."/>
            <person name="Myers E.W."/>
            <person name="Venter J.C."/>
        </authorList>
    </citation>
    <scope>NUCLEOTIDE SEQUENCE [LARGE SCALE GENOMIC DNA]</scope>
</reference>
<reference key="5">
    <citation type="journal article" date="2004" name="Genome Res.">
        <title>The status, quality, and expansion of the NIH full-length cDNA project: the Mammalian Gene Collection (MGC).</title>
        <authorList>
            <consortium name="The MGC Project Team"/>
        </authorList>
    </citation>
    <scope>NUCLEOTIDE SEQUENCE [LARGE SCALE MRNA] (ISOFORM 1)</scope>
    <source>
        <tissue>Testis</tissue>
    </source>
</reference>
<reference key="6">
    <citation type="journal article" date="2012" name="N. Engl. J. Med.">
        <title>Diagnostic exome sequencing in persons with severe intellectual disability.</title>
        <authorList>
            <person name="de Ligt J."/>
            <person name="Willemsen M.H."/>
            <person name="van Bon B.W."/>
            <person name="Kleefstra T."/>
            <person name="Yntema H.G."/>
            <person name="Kroes T."/>
            <person name="Vulto-van Silfhout A.T."/>
            <person name="Koolen D.A."/>
            <person name="de Vries P."/>
            <person name="Gilissen C."/>
            <person name="del Rosario M."/>
            <person name="Hoischen A."/>
            <person name="Scheffer H."/>
            <person name="de Vries B.B."/>
            <person name="Brunner H.G."/>
            <person name="Veltman J.A."/>
            <person name="Vissers L.E."/>
        </authorList>
    </citation>
    <scope>VARIANT GLY-53</scope>
</reference>
<accession>P55082</accession>
<accession>B2RDK0</accession>
<accession>B4DKA1</accession>
<accession>Q9NXA7</accession>
<comment type="function">
    <text>Component of the elastin-associated microfibrils.</text>
</comment>
<comment type="interaction">
    <interactant intactId="EBI-11287173">
        <id>P55082</id>
    </interactant>
    <interactant intactId="EBI-12193965">
        <id>Q9Y3R0-3</id>
        <label>GRIP1</label>
    </interactant>
    <organismsDiffer>false</organismsDiffer>
    <experiments>3</experiments>
</comment>
<comment type="subcellular location">
    <subcellularLocation>
        <location evidence="6">Cell membrane</location>
        <topology evidence="6">Single-pass type I membrane protein</topology>
    </subcellularLocation>
</comment>
<comment type="alternative products">
    <event type="alternative splicing"/>
    <isoform>
        <id>P55082-1</id>
        <name>1</name>
        <sequence type="displayed"/>
    </isoform>
    <isoform>
        <id>P55082-2</id>
        <name>2</name>
        <sequence type="described" ref="VSP_042948"/>
    </isoform>
</comment>
<comment type="PTM">
    <text evidence="6">Glycosylated.</text>
</comment>
<comment type="sequence caution" evidence="6">
    <conflict type="frameshift">
        <sequence resource="EMBL-CDS" id="BAA91108"/>
    </conflict>
</comment>
<organism>
    <name type="scientific">Homo sapiens</name>
    <name type="common">Human</name>
    <dbReference type="NCBI Taxonomy" id="9606"/>
    <lineage>
        <taxon>Eukaryota</taxon>
        <taxon>Metazoa</taxon>
        <taxon>Chordata</taxon>
        <taxon>Craniata</taxon>
        <taxon>Vertebrata</taxon>
        <taxon>Euteleostomi</taxon>
        <taxon>Mammalia</taxon>
        <taxon>Eutheria</taxon>
        <taxon>Euarchontoglires</taxon>
        <taxon>Primates</taxon>
        <taxon>Haplorrhini</taxon>
        <taxon>Catarrhini</taxon>
        <taxon>Hominidae</taxon>
        <taxon>Homo</taxon>
    </lineage>
</organism>
<protein>
    <recommendedName>
        <fullName>Microfibril-associated glycoprotein 3</fullName>
    </recommendedName>
</protein>
<proteinExistence type="evidence at protein level"/>
<feature type="signal peptide" evidence="1">
    <location>
        <begin position="1"/>
        <end position="18"/>
    </location>
</feature>
<feature type="chain" id="PRO_0000014865" description="Microfibril-associated glycoprotein 3">
    <location>
        <begin position="19"/>
        <end position="362"/>
    </location>
</feature>
<feature type="topological domain" description="Extracellular" evidence="1">
    <location>
        <begin position="19"/>
        <end position="147"/>
    </location>
</feature>
<feature type="transmembrane region" description="Helical" evidence="1">
    <location>
        <begin position="148"/>
        <end position="170"/>
    </location>
</feature>
<feature type="topological domain" description="Cytoplasmic" evidence="1">
    <location>
        <begin position="171"/>
        <end position="362"/>
    </location>
</feature>
<feature type="domain" description="Ig-like C2-type">
    <location>
        <begin position="45"/>
        <end position="137"/>
    </location>
</feature>
<feature type="region of interest" description="Disordered" evidence="3">
    <location>
        <begin position="285"/>
        <end position="306"/>
    </location>
</feature>
<feature type="region of interest" description="Disordered" evidence="3">
    <location>
        <begin position="323"/>
        <end position="350"/>
    </location>
</feature>
<feature type="compositionally biased region" description="Polar residues" evidence="3">
    <location>
        <begin position="323"/>
        <end position="337"/>
    </location>
</feature>
<feature type="glycosylation site" description="N-linked (GlcNAc...) asparagine" evidence="1">
    <location>
        <position position="36"/>
    </location>
</feature>
<feature type="glycosylation site" description="N-linked (GlcNAc...) asparagine" evidence="1">
    <location>
        <position position="41"/>
    </location>
</feature>
<feature type="glycosylation site" description="N-linked (GlcNAc...) asparagine" evidence="1">
    <location>
        <position position="110"/>
    </location>
</feature>
<feature type="disulfide bond" evidence="2">
    <location>
        <begin position="73"/>
        <end position="124"/>
    </location>
</feature>
<feature type="splice variant" id="VSP_042948" description="In isoform 2." evidence="5">
    <location>
        <begin position="1"/>
        <end position="146"/>
    </location>
</feature>
<feature type="sequence variant" id="VAR_069386" description="In dbSNP:rs748271641." evidence="4">
    <original>S</original>
    <variation>G</variation>
    <location>
        <position position="53"/>
    </location>
</feature>
<gene>
    <name type="primary">MFAP3</name>
</gene>
<dbReference type="EMBL" id="L35251">
    <property type="protein sequence ID" value="AAC41753.1"/>
    <property type="molecule type" value="Genomic_DNA"/>
</dbReference>
<dbReference type="EMBL" id="AK000358">
    <property type="protein sequence ID" value="BAA91108.1"/>
    <property type="status" value="ALT_FRAME"/>
    <property type="molecule type" value="mRNA"/>
</dbReference>
<dbReference type="EMBL" id="AK296468">
    <property type="protein sequence ID" value="BAG59113.1"/>
    <property type="molecule type" value="mRNA"/>
</dbReference>
<dbReference type="EMBL" id="AK315573">
    <property type="protein sequence ID" value="BAG37947.1"/>
    <property type="molecule type" value="mRNA"/>
</dbReference>
<dbReference type="EMBL" id="AC008672">
    <property type="status" value="NOT_ANNOTATED_CDS"/>
    <property type="molecule type" value="Genomic_DNA"/>
</dbReference>
<dbReference type="EMBL" id="AC010232">
    <property type="status" value="NOT_ANNOTATED_CDS"/>
    <property type="molecule type" value="Genomic_DNA"/>
</dbReference>
<dbReference type="EMBL" id="AC010295">
    <property type="status" value="NOT_ANNOTATED_CDS"/>
    <property type="molecule type" value="Genomic_DNA"/>
</dbReference>
<dbReference type="EMBL" id="AC022088">
    <property type="status" value="NOT_ANNOTATED_CDS"/>
    <property type="molecule type" value="Genomic_DNA"/>
</dbReference>
<dbReference type="EMBL" id="CH471062">
    <property type="protein sequence ID" value="EAW61645.1"/>
    <property type="molecule type" value="Genomic_DNA"/>
</dbReference>
<dbReference type="EMBL" id="BC026244">
    <property type="protein sequence ID" value="AAH26244.1"/>
    <property type="molecule type" value="mRNA"/>
</dbReference>
<dbReference type="CCDS" id="CCDS4324.1">
    <molecule id="P55082-1"/>
</dbReference>
<dbReference type="CCDS" id="CCDS47319.1">
    <molecule id="P55082-2"/>
</dbReference>
<dbReference type="PIR" id="A56745">
    <property type="entry name" value="A56745"/>
</dbReference>
<dbReference type="RefSeq" id="NP_001128509.1">
    <molecule id="P55082-2"/>
    <property type="nucleotide sequence ID" value="NM_001135037.2"/>
</dbReference>
<dbReference type="RefSeq" id="NP_001229265.1">
    <molecule id="P55082-1"/>
    <property type="nucleotide sequence ID" value="NM_001242336.2"/>
</dbReference>
<dbReference type="RefSeq" id="NP_005918.1">
    <molecule id="P55082-1"/>
    <property type="nucleotide sequence ID" value="NM_005927.5"/>
</dbReference>
<dbReference type="BioGRID" id="110396">
    <property type="interactions" value="68"/>
</dbReference>
<dbReference type="FunCoup" id="P55082">
    <property type="interactions" value="1113"/>
</dbReference>
<dbReference type="IntAct" id="P55082">
    <property type="interactions" value="60"/>
</dbReference>
<dbReference type="STRING" id="9606.ENSP00000322956"/>
<dbReference type="GlyCosmos" id="P55082">
    <property type="glycosylation" value="3 sites, No reported glycans"/>
</dbReference>
<dbReference type="GlyGen" id="P55082">
    <property type="glycosylation" value="3 sites"/>
</dbReference>
<dbReference type="iPTMnet" id="P55082"/>
<dbReference type="PhosphoSitePlus" id="P55082"/>
<dbReference type="SwissPalm" id="P55082"/>
<dbReference type="BioMuta" id="MFAP3"/>
<dbReference type="DMDM" id="1709013"/>
<dbReference type="jPOST" id="P55082"/>
<dbReference type="MassIVE" id="P55082"/>
<dbReference type="PaxDb" id="9606-ENSP00000322956"/>
<dbReference type="PeptideAtlas" id="P55082"/>
<dbReference type="ProteomicsDB" id="56783">
    <molecule id="P55082-1"/>
</dbReference>
<dbReference type="ProteomicsDB" id="56784">
    <molecule id="P55082-2"/>
</dbReference>
<dbReference type="Pumba" id="P55082"/>
<dbReference type="Antibodypedia" id="2980">
    <property type="antibodies" value="152 antibodies from 16 providers"/>
</dbReference>
<dbReference type="DNASU" id="4238"/>
<dbReference type="Ensembl" id="ENST00000322602.9">
    <molecule id="P55082-1"/>
    <property type="protein sequence ID" value="ENSP00000322956.5"/>
    <property type="gene ID" value="ENSG00000037749.13"/>
</dbReference>
<dbReference type="Ensembl" id="ENST00000439768.2">
    <molecule id="P55082-2"/>
    <property type="protein sequence ID" value="ENSP00000414219.2"/>
    <property type="gene ID" value="ENSG00000037749.13"/>
</dbReference>
<dbReference type="Ensembl" id="ENST00000522782.6">
    <molecule id="P55082-1"/>
    <property type="protein sequence ID" value="ENSP00000430852.2"/>
    <property type="gene ID" value="ENSG00000037749.13"/>
</dbReference>
<dbReference type="GeneID" id="4238"/>
<dbReference type="KEGG" id="hsa:4238"/>
<dbReference type="MANE-Select" id="ENST00000522782.6">
    <property type="protein sequence ID" value="ENSP00000430852.2"/>
    <property type="RefSeq nucleotide sequence ID" value="NM_005927.5"/>
    <property type="RefSeq protein sequence ID" value="NP_005918.1"/>
</dbReference>
<dbReference type="UCSC" id="uc003lvf.3">
    <molecule id="P55082-1"/>
    <property type="organism name" value="human"/>
</dbReference>
<dbReference type="AGR" id="HGNC:7034"/>
<dbReference type="CTD" id="4238"/>
<dbReference type="DisGeNET" id="4238"/>
<dbReference type="GeneCards" id="MFAP3"/>
<dbReference type="HGNC" id="HGNC:7034">
    <property type="gene designation" value="MFAP3"/>
</dbReference>
<dbReference type="HPA" id="ENSG00000037749">
    <property type="expression patterns" value="Low tissue specificity"/>
</dbReference>
<dbReference type="MIM" id="600491">
    <property type="type" value="gene"/>
</dbReference>
<dbReference type="neXtProt" id="NX_P55082"/>
<dbReference type="OpenTargets" id="ENSG00000037749"/>
<dbReference type="PharmGKB" id="PA30770"/>
<dbReference type="VEuPathDB" id="HostDB:ENSG00000037749"/>
<dbReference type="eggNOG" id="ENOG502QW9J">
    <property type="taxonomic scope" value="Eukaryota"/>
</dbReference>
<dbReference type="GeneTree" id="ENSGT00390000011576"/>
<dbReference type="HOGENOM" id="CLU_1277263_0_0_1"/>
<dbReference type="InParanoid" id="P55082"/>
<dbReference type="OMA" id="KPHCCLF"/>
<dbReference type="OrthoDB" id="8611351at2759"/>
<dbReference type="PAN-GO" id="P55082">
    <property type="GO annotations" value="3 GO annotations based on evolutionary models"/>
</dbReference>
<dbReference type="PhylomeDB" id="P55082"/>
<dbReference type="TreeFam" id="TF333205"/>
<dbReference type="PathwayCommons" id="P55082"/>
<dbReference type="Reactome" id="R-HSA-2129379">
    <property type="pathway name" value="Molecules associated with elastic fibres"/>
</dbReference>
<dbReference type="SignaLink" id="P55082"/>
<dbReference type="BioGRID-ORCS" id="4238">
    <property type="hits" value="15 hits in 1151 CRISPR screens"/>
</dbReference>
<dbReference type="ChiTaRS" id="MFAP3">
    <property type="organism name" value="human"/>
</dbReference>
<dbReference type="GenomeRNAi" id="4238"/>
<dbReference type="Pharos" id="P55082">
    <property type="development level" value="Tdark"/>
</dbReference>
<dbReference type="PRO" id="PR:P55082"/>
<dbReference type="Proteomes" id="UP000005640">
    <property type="component" value="Chromosome 5"/>
</dbReference>
<dbReference type="RNAct" id="P55082">
    <property type="molecule type" value="protein"/>
</dbReference>
<dbReference type="Bgee" id="ENSG00000037749">
    <property type="expression patterns" value="Expressed in adrenal tissue and 165 other cell types or tissues"/>
</dbReference>
<dbReference type="ExpressionAtlas" id="P55082">
    <property type="expression patterns" value="baseline and differential"/>
</dbReference>
<dbReference type="GO" id="GO:0005576">
    <property type="term" value="C:extracellular region"/>
    <property type="evidence" value="ECO:0000304"/>
    <property type="project" value="Reactome"/>
</dbReference>
<dbReference type="GO" id="GO:0005886">
    <property type="term" value="C:plasma membrane"/>
    <property type="evidence" value="ECO:0007669"/>
    <property type="project" value="UniProtKB-SubCell"/>
</dbReference>
<dbReference type="CDD" id="cd00096">
    <property type="entry name" value="Ig"/>
    <property type="match status" value="1"/>
</dbReference>
<dbReference type="FunFam" id="2.60.40.10:FF:003021">
    <property type="entry name" value="Microfibril-associated glycoprotein 3"/>
    <property type="match status" value="1"/>
</dbReference>
<dbReference type="Gene3D" id="2.60.40.10">
    <property type="entry name" value="Immunoglobulins"/>
    <property type="match status" value="1"/>
</dbReference>
<dbReference type="InterPro" id="IPR007110">
    <property type="entry name" value="Ig-like_dom"/>
</dbReference>
<dbReference type="InterPro" id="IPR036179">
    <property type="entry name" value="Ig-like_dom_sf"/>
</dbReference>
<dbReference type="InterPro" id="IPR013783">
    <property type="entry name" value="Ig-like_fold"/>
</dbReference>
<dbReference type="InterPro" id="IPR003599">
    <property type="entry name" value="Ig_sub"/>
</dbReference>
<dbReference type="InterPro" id="IPR003598">
    <property type="entry name" value="Ig_sub2"/>
</dbReference>
<dbReference type="InterPro" id="IPR013151">
    <property type="entry name" value="Immunoglobulin_dom"/>
</dbReference>
<dbReference type="PANTHER" id="PTHR14340">
    <property type="entry name" value="MICROFIBRIL-ASSOCIATED GLYCOPROTEIN 3"/>
    <property type="match status" value="1"/>
</dbReference>
<dbReference type="PANTHER" id="PTHR14340:SF4">
    <property type="entry name" value="MICROFIBRIL-ASSOCIATED GLYCOPROTEIN 3"/>
    <property type="match status" value="1"/>
</dbReference>
<dbReference type="Pfam" id="PF00047">
    <property type="entry name" value="ig"/>
    <property type="match status" value="1"/>
</dbReference>
<dbReference type="SMART" id="SM00409">
    <property type="entry name" value="IG"/>
    <property type="match status" value="1"/>
</dbReference>
<dbReference type="SMART" id="SM00408">
    <property type="entry name" value="IGc2"/>
    <property type="match status" value="1"/>
</dbReference>
<dbReference type="SUPFAM" id="SSF48726">
    <property type="entry name" value="Immunoglobulin"/>
    <property type="match status" value="1"/>
</dbReference>
<dbReference type="PROSITE" id="PS50835">
    <property type="entry name" value="IG_LIKE"/>
    <property type="match status" value="1"/>
</dbReference>
<name>MFAP3_HUMAN</name>
<sequence length="362" mass="40165">MKLHCCLFTLVASIIVPAAFVLEDVDFDQMVSLEANRSSYNASFPSSFELSASSHSDDDVIIAKEGTSVSIECLLTASHYEDVHWHNSKGQQLDGRSRGGKWLVSDNFLNITNVAFDDRGLYTCFVTSPIRASYSVTLRVIFTSGDMSVYYMIVCLIAFTITLILNVTRLCMMSSHLRKTEKAINEFFRTEGAEKLQKAFEIAKRIPIITSAKTLELAKVTQFKTMEFARYIEELARSVPLPPLILNCRAFVEEMFEAVRVDDPDDLGERIKERPALNAQGGIYVINPEMGRSNSPGGDSDDGSLNEQGQEIAVQVSVHLQSETKSIDTESQGSSHFSPPDDIGSAESNCNYKDGAYENCQL</sequence>
<evidence type="ECO:0000255" key="1"/>
<evidence type="ECO:0000255" key="2">
    <source>
        <dbReference type="PROSITE-ProRule" id="PRU00114"/>
    </source>
</evidence>
<evidence type="ECO:0000256" key="3">
    <source>
        <dbReference type="SAM" id="MobiDB-lite"/>
    </source>
</evidence>
<evidence type="ECO:0000269" key="4">
    <source>
    </source>
</evidence>
<evidence type="ECO:0000303" key="5">
    <source>
    </source>
</evidence>
<evidence type="ECO:0000305" key="6"/>
<keyword id="KW-0025">Alternative splicing</keyword>
<keyword id="KW-1003">Cell membrane</keyword>
<keyword id="KW-1015">Disulfide bond</keyword>
<keyword id="KW-0325">Glycoprotein</keyword>
<keyword id="KW-0393">Immunoglobulin domain</keyword>
<keyword id="KW-0472">Membrane</keyword>
<keyword id="KW-1267">Proteomics identification</keyword>
<keyword id="KW-1185">Reference proteome</keyword>
<keyword id="KW-0732">Signal</keyword>
<keyword id="KW-0812">Transmembrane</keyword>
<keyword id="KW-1133">Transmembrane helix</keyword>